<comment type="function">
    <text evidence="1">Catalyzes the attachment of proline to tRNA(Pro) in a two-step reaction: proline is first activated by ATP to form Pro-AMP and then transferred to the acceptor end of tRNA(Pro).</text>
</comment>
<comment type="catalytic activity">
    <reaction evidence="1">
        <text>tRNA(Pro) + L-proline + ATP = L-prolyl-tRNA(Pro) + AMP + diphosphate</text>
        <dbReference type="Rhea" id="RHEA:14305"/>
        <dbReference type="Rhea" id="RHEA-COMP:9700"/>
        <dbReference type="Rhea" id="RHEA-COMP:9702"/>
        <dbReference type="ChEBI" id="CHEBI:30616"/>
        <dbReference type="ChEBI" id="CHEBI:33019"/>
        <dbReference type="ChEBI" id="CHEBI:60039"/>
        <dbReference type="ChEBI" id="CHEBI:78442"/>
        <dbReference type="ChEBI" id="CHEBI:78532"/>
        <dbReference type="ChEBI" id="CHEBI:456215"/>
        <dbReference type="EC" id="6.1.1.15"/>
    </reaction>
</comment>
<comment type="subunit">
    <text evidence="1">Homodimer.</text>
</comment>
<comment type="subcellular location">
    <subcellularLocation>
        <location evidence="1">Cytoplasm</location>
    </subcellularLocation>
</comment>
<comment type="similarity">
    <text evidence="1">Belongs to the class-II aminoacyl-tRNA synthetase family. ProS type 2 subfamily.</text>
</comment>
<sequence length="440" mass="49298">MRLSRYFLPILRENPKEAEIVSHRLMLRAGMIRQEAAGIYSWLPLGLRVLQKVAEIVRQEMNRAGAIELLMPTLQLADLWRETGRYEAYGPEMLRIKDRHEREMLYGPTNEDMITAIFRSYVRSYRELPKILYHIQWKFRDEQRPRFGVMRGREFLMKDAYSFDVDEAAARLAYNRMFVSYLRIFARMGLRVIPMRAETGPIGGDQSHEFIILAETGESAVYCDAGVLNLPIPDETIDYDGDLSPIVKQWTSLYAATEDVHDAERFALETTEGQRIETRGIEVGQVFFFGDKYSKPMNANIAGPDGVERPFQGGSYGVGVSRLVGALIEANHDEAGIIWPASVAPFKVGIANLKVGDAATDAACEKLLAALEKAGVDVLYDDSADRPGAKFAKLDLIGLPYQAIVGPKGLAEGKIEIKTRASGERVELSLDEAIERLIAS</sequence>
<name>SYP_METSB</name>
<feature type="chain" id="PRO_1000185527" description="Proline--tRNA ligase">
    <location>
        <begin position="1"/>
        <end position="440"/>
    </location>
</feature>
<protein>
    <recommendedName>
        <fullName evidence="1">Proline--tRNA ligase</fullName>
        <ecNumber evidence="1">6.1.1.15</ecNumber>
    </recommendedName>
    <alternativeName>
        <fullName evidence="1">Prolyl-tRNA synthetase</fullName>
        <shortName evidence="1">ProRS</shortName>
    </alternativeName>
</protein>
<dbReference type="EC" id="6.1.1.15" evidence="1"/>
<dbReference type="EMBL" id="CP001280">
    <property type="protein sequence ID" value="ACK49672.1"/>
    <property type="molecule type" value="Genomic_DNA"/>
</dbReference>
<dbReference type="RefSeq" id="WP_012589742.1">
    <property type="nucleotide sequence ID" value="NC_011666.1"/>
</dbReference>
<dbReference type="SMR" id="B8EP84"/>
<dbReference type="STRING" id="395965.Msil_0701"/>
<dbReference type="KEGG" id="msl:Msil_0701"/>
<dbReference type="eggNOG" id="COG0442">
    <property type="taxonomic scope" value="Bacteria"/>
</dbReference>
<dbReference type="HOGENOM" id="CLU_016739_4_2_5"/>
<dbReference type="OrthoDB" id="9809052at2"/>
<dbReference type="Proteomes" id="UP000002257">
    <property type="component" value="Chromosome"/>
</dbReference>
<dbReference type="GO" id="GO:0005829">
    <property type="term" value="C:cytosol"/>
    <property type="evidence" value="ECO:0007669"/>
    <property type="project" value="TreeGrafter"/>
</dbReference>
<dbReference type="GO" id="GO:0005524">
    <property type="term" value="F:ATP binding"/>
    <property type="evidence" value="ECO:0007669"/>
    <property type="project" value="UniProtKB-UniRule"/>
</dbReference>
<dbReference type="GO" id="GO:0004827">
    <property type="term" value="F:proline-tRNA ligase activity"/>
    <property type="evidence" value="ECO:0007669"/>
    <property type="project" value="UniProtKB-UniRule"/>
</dbReference>
<dbReference type="GO" id="GO:0006433">
    <property type="term" value="P:prolyl-tRNA aminoacylation"/>
    <property type="evidence" value="ECO:0007669"/>
    <property type="project" value="UniProtKB-UniRule"/>
</dbReference>
<dbReference type="CDD" id="cd00861">
    <property type="entry name" value="ProRS_anticodon_short"/>
    <property type="match status" value="1"/>
</dbReference>
<dbReference type="CDD" id="cd00779">
    <property type="entry name" value="ProRS_core_prok"/>
    <property type="match status" value="1"/>
</dbReference>
<dbReference type="FunFam" id="3.30.930.10:FF:000042">
    <property type="entry name" value="probable proline--tRNA ligase, mitochondrial"/>
    <property type="match status" value="1"/>
</dbReference>
<dbReference type="FunFam" id="3.40.50.800:FF:000032">
    <property type="entry name" value="Proline--tRNA ligase"/>
    <property type="match status" value="1"/>
</dbReference>
<dbReference type="Gene3D" id="3.40.50.800">
    <property type="entry name" value="Anticodon-binding domain"/>
    <property type="match status" value="1"/>
</dbReference>
<dbReference type="Gene3D" id="3.30.930.10">
    <property type="entry name" value="Bira Bifunctional Protein, Domain 2"/>
    <property type="match status" value="1"/>
</dbReference>
<dbReference type="HAMAP" id="MF_01570">
    <property type="entry name" value="Pro_tRNA_synth_type2"/>
    <property type="match status" value="1"/>
</dbReference>
<dbReference type="InterPro" id="IPR002314">
    <property type="entry name" value="aa-tRNA-synt_IIb"/>
</dbReference>
<dbReference type="InterPro" id="IPR006195">
    <property type="entry name" value="aa-tRNA-synth_II"/>
</dbReference>
<dbReference type="InterPro" id="IPR045864">
    <property type="entry name" value="aa-tRNA-synth_II/BPL/LPL"/>
</dbReference>
<dbReference type="InterPro" id="IPR004154">
    <property type="entry name" value="Anticodon-bd"/>
</dbReference>
<dbReference type="InterPro" id="IPR036621">
    <property type="entry name" value="Anticodon-bd_dom_sf"/>
</dbReference>
<dbReference type="InterPro" id="IPR002316">
    <property type="entry name" value="Pro-tRNA-ligase_IIa"/>
</dbReference>
<dbReference type="InterPro" id="IPR004500">
    <property type="entry name" value="Pro-tRNA-synth_IIa_bac-type"/>
</dbReference>
<dbReference type="InterPro" id="IPR050062">
    <property type="entry name" value="Pro-tRNA_synthetase"/>
</dbReference>
<dbReference type="InterPro" id="IPR023716">
    <property type="entry name" value="Prolyl-tRNA_ligase_IIa_type2"/>
</dbReference>
<dbReference type="InterPro" id="IPR044140">
    <property type="entry name" value="ProRS_anticodon_short"/>
</dbReference>
<dbReference type="InterPro" id="IPR033730">
    <property type="entry name" value="ProRS_core_prok"/>
</dbReference>
<dbReference type="NCBIfam" id="NF008979">
    <property type="entry name" value="PRK12325.1"/>
    <property type="match status" value="1"/>
</dbReference>
<dbReference type="NCBIfam" id="TIGR00409">
    <property type="entry name" value="proS_fam_II"/>
    <property type="match status" value="1"/>
</dbReference>
<dbReference type="PANTHER" id="PTHR42753">
    <property type="entry name" value="MITOCHONDRIAL RIBOSOME PROTEIN L39/PROLYL-TRNA LIGASE FAMILY MEMBER"/>
    <property type="match status" value="1"/>
</dbReference>
<dbReference type="PANTHER" id="PTHR42753:SF2">
    <property type="entry name" value="PROLINE--TRNA LIGASE"/>
    <property type="match status" value="1"/>
</dbReference>
<dbReference type="Pfam" id="PF03129">
    <property type="entry name" value="HGTP_anticodon"/>
    <property type="match status" value="1"/>
</dbReference>
<dbReference type="Pfam" id="PF00587">
    <property type="entry name" value="tRNA-synt_2b"/>
    <property type="match status" value="1"/>
</dbReference>
<dbReference type="PRINTS" id="PR01046">
    <property type="entry name" value="TRNASYNTHPRO"/>
</dbReference>
<dbReference type="SUPFAM" id="SSF52954">
    <property type="entry name" value="Class II aaRS ABD-related"/>
    <property type="match status" value="1"/>
</dbReference>
<dbReference type="SUPFAM" id="SSF55681">
    <property type="entry name" value="Class II aaRS and biotin synthetases"/>
    <property type="match status" value="1"/>
</dbReference>
<dbReference type="PROSITE" id="PS50862">
    <property type="entry name" value="AA_TRNA_LIGASE_II"/>
    <property type="match status" value="1"/>
</dbReference>
<proteinExistence type="inferred from homology"/>
<accession>B8EP84</accession>
<reference key="1">
    <citation type="journal article" date="2010" name="J. Bacteriol.">
        <title>Complete genome sequence of the aerobic facultative methanotroph Methylocella silvestris BL2.</title>
        <authorList>
            <person name="Chen Y."/>
            <person name="Crombie A."/>
            <person name="Rahman M.T."/>
            <person name="Dedysh S.N."/>
            <person name="Liesack W."/>
            <person name="Stott M.B."/>
            <person name="Alam M."/>
            <person name="Theisen A.R."/>
            <person name="Murrell J.C."/>
            <person name="Dunfield P.F."/>
        </authorList>
    </citation>
    <scope>NUCLEOTIDE SEQUENCE [LARGE SCALE GENOMIC DNA]</scope>
    <source>
        <strain>DSM 15510 / CIP 108128 / LMG 27833 / NCIMB 13906 / BL2</strain>
    </source>
</reference>
<keyword id="KW-0030">Aminoacyl-tRNA synthetase</keyword>
<keyword id="KW-0067">ATP-binding</keyword>
<keyword id="KW-0963">Cytoplasm</keyword>
<keyword id="KW-0436">Ligase</keyword>
<keyword id="KW-0547">Nucleotide-binding</keyword>
<keyword id="KW-0648">Protein biosynthesis</keyword>
<keyword id="KW-1185">Reference proteome</keyword>
<gene>
    <name evidence="1" type="primary">proS</name>
    <name type="ordered locus">Msil_0701</name>
</gene>
<organism>
    <name type="scientific">Methylocella silvestris (strain DSM 15510 / CIP 108128 / LMG 27833 / NCIMB 13906 / BL2)</name>
    <dbReference type="NCBI Taxonomy" id="395965"/>
    <lineage>
        <taxon>Bacteria</taxon>
        <taxon>Pseudomonadati</taxon>
        <taxon>Pseudomonadota</taxon>
        <taxon>Alphaproteobacteria</taxon>
        <taxon>Hyphomicrobiales</taxon>
        <taxon>Beijerinckiaceae</taxon>
        <taxon>Methylocella</taxon>
    </lineage>
</organism>
<evidence type="ECO:0000255" key="1">
    <source>
        <dbReference type="HAMAP-Rule" id="MF_01570"/>
    </source>
</evidence>